<accession>A7N9T4</accession>
<reference key="1">
    <citation type="journal article" date="2009" name="PLoS ONE">
        <title>Complete genome sequence of Francisella tularensis subspecies holarctica FTNF002-00.</title>
        <authorList>
            <person name="Barabote R.D."/>
            <person name="Xie G."/>
            <person name="Brettin T.S."/>
            <person name="Hinrichs S.H."/>
            <person name="Fey P.D."/>
            <person name="Jay J.J."/>
            <person name="Engle J.L."/>
            <person name="Godbole S.D."/>
            <person name="Noronha J.M."/>
            <person name="Scheuermann R.H."/>
            <person name="Zhou L.W."/>
            <person name="Lion C."/>
            <person name="Dempsey M.P."/>
        </authorList>
    </citation>
    <scope>NUCLEOTIDE SEQUENCE [LARGE SCALE GENOMIC DNA]</scope>
    <source>
        <strain>FTNF002-00 / FTA</strain>
    </source>
</reference>
<organism>
    <name type="scientific">Francisella tularensis subsp. holarctica (strain FTNF002-00 / FTA)</name>
    <dbReference type="NCBI Taxonomy" id="458234"/>
    <lineage>
        <taxon>Bacteria</taxon>
        <taxon>Pseudomonadati</taxon>
        <taxon>Pseudomonadota</taxon>
        <taxon>Gammaproteobacteria</taxon>
        <taxon>Thiotrichales</taxon>
        <taxon>Francisellaceae</taxon>
        <taxon>Francisella</taxon>
    </lineage>
</organism>
<proteinExistence type="inferred from homology"/>
<name>RS17_FRATF</name>
<sequence length="83" mass="9851">MSDKTRLLEGKVSSVAMDKTVVVRAERYVKHPLYGKFVKKTTKYYVHDENNECKEGDVIKFKETRPYSKTKKWCLVDIIHREK</sequence>
<evidence type="ECO:0000255" key="1">
    <source>
        <dbReference type="HAMAP-Rule" id="MF_01345"/>
    </source>
</evidence>
<evidence type="ECO:0000305" key="2"/>
<dbReference type="EMBL" id="CP000803">
    <property type="protein sequence ID" value="ABU60737.1"/>
    <property type="molecule type" value="Genomic_DNA"/>
</dbReference>
<dbReference type="RefSeq" id="WP_010030776.1">
    <property type="nucleotide sequence ID" value="NC_009749.1"/>
</dbReference>
<dbReference type="SMR" id="A7N9T4"/>
<dbReference type="KEGG" id="fta:FTA_0260"/>
<dbReference type="HOGENOM" id="CLU_073626_1_1_6"/>
<dbReference type="GO" id="GO:0022627">
    <property type="term" value="C:cytosolic small ribosomal subunit"/>
    <property type="evidence" value="ECO:0007669"/>
    <property type="project" value="TreeGrafter"/>
</dbReference>
<dbReference type="GO" id="GO:0019843">
    <property type="term" value="F:rRNA binding"/>
    <property type="evidence" value="ECO:0007669"/>
    <property type="project" value="UniProtKB-UniRule"/>
</dbReference>
<dbReference type="GO" id="GO:0003735">
    <property type="term" value="F:structural constituent of ribosome"/>
    <property type="evidence" value="ECO:0007669"/>
    <property type="project" value="InterPro"/>
</dbReference>
<dbReference type="GO" id="GO:0006412">
    <property type="term" value="P:translation"/>
    <property type="evidence" value="ECO:0007669"/>
    <property type="project" value="UniProtKB-UniRule"/>
</dbReference>
<dbReference type="CDD" id="cd00364">
    <property type="entry name" value="Ribosomal_uS17"/>
    <property type="match status" value="1"/>
</dbReference>
<dbReference type="Gene3D" id="2.40.50.140">
    <property type="entry name" value="Nucleic acid-binding proteins"/>
    <property type="match status" value="1"/>
</dbReference>
<dbReference type="HAMAP" id="MF_01345_B">
    <property type="entry name" value="Ribosomal_uS17_B"/>
    <property type="match status" value="1"/>
</dbReference>
<dbReference type="InterPro" id="IPR012340">
    <property type="entry name" value="NA-bd_OB-fold"/>
</dbReference>
<dbReference type="InterPro" id="IPR000266">
    <property type="entry name" value="Ribosomal_uS17"/>
</dbReference>
<dbReference type="InterPro" id="IPR019984">
    <property type="entry name" value="Ribosomal_uS17_bact/chlr"/>
</dbReference>
<dbReference type="NCBIfam" id="NF004123">
    <property type="entry name" value="PRK05610.1"/>
    <property type="match status" value="1"/>
</dbReference>
<dbReference type="NCBIfam" id="TIGR03635">
    <property type="entry name" value="uS17_bact"/>
    <property type="match status" value="1"/>
</dbReference>
<dbReference type="PANTHER" id="PTHR10744">
    <property type="entry name" value="40S RIBOSOMAL PROTEIN S11 FAMILY MEMBER"/>
    <property type="match status" value="1"/>
</dbReference>
<dbReference type="PANTHER" id="PTHR10744:SF1">
    <property type="entry name" value="SMALL RIBOSOMAL SUBUNIT PROTEIN US17M"/>
    <property type="match status" value="1"/>
</dbReference>
<dbReference type="Pfam" id="PF00366">
    <property type="entry name" value="Ribosomal_S17"/>
    <property type="match status" value="1"/>
</dbReference>
<dbReference type="PRINTS" id="PR00973">
    <property type="entry name" value="RIBOSOMALS17"/>
</dbReference>
<dbReference type="SUPFAM" id="SSF50249">
    <property type="entry name" value="Nucleic acid-binding proteins"/>
    <property type="match status" value="1"/>
</dbReference>
<keyword id="KW-0687">Ribonucleoprotein</keyword>
<keyword id="KW-0689">Ribosomal protein</keyword>
<keyword id="KW-0694">RNA-binding</keyword>
<keyword id="KW-0699">rRNA-binding</keyword>
<protein>
    <recommendedName>
        <fullName evidence="1">Small ribosomal subunit protein uS17</fullName>
    </recommendedName>
    <alternativeName>
        <fullName evidence="2">30S ribosomal protein S17</fullName>
    </alternativeName>
</protein>
<feature type="chain" id="PRO_1000054953" description="Small ribosomal subunit protein uS17">
    <location>
        <begin position="1"/>
        <end position="83"/>
    </location>
</feature>
<gene>
    <name evidence="1" type="primary">rpsQ</name>
    <name type="ordered locus">FTA_0260</name>
</gene>
<comment type="function">
    <text evidence="1">One of the primary rRNA binding proteins, it binds specifically to the 5'-end of 16S ribosomal RNA.</text>
</comment>
<comment type="subunit">
    <text evidence="1">Part of the 30S ribosomal subunit.</text>
</comment>
<comment type="similarity">
    <text evidence="1">Belongs to the universal ribosomal protein uS17 family.</text>
</comment>